<reference key="1">
    <citation type="journal article" date="2005" name="Mol. Biol. Evol.">
        <title>Analysis of Acorus calamus chloroplast genome and its phylogenetic implications.</title>
        <authorList>
            <person name="Goremykin V.V."/>
            <person name="Holland B."/>
            <person name="Hirsch-Ernst K.I."/>
            <person name="Hellwig F.H."/>
        </authorList>
    </citation>
    <scope>NUCLEOTIDE SEQUENCE [LARGE SCALE GENOMIC DNA]</scope>
</reference>
<evidence type="ECO:0000250" key="1"/>
<evidence type="ECO:0000255" key="2"/>
<evidence type="ECO:0000305" key="3"/>
<organism>
    <name type="scientific">Acorus calamus</name>
    <name type="common">Sweet flag</name>
    <dbReference type="NCBI Taxonomy" id="4465"/>
    <lineage>
        <taxon>Eukaryota</taxon>
        <taxon>Viridiplantae</taxon>
        <taxon>Streptophyta</taxon>
        <taxon>Embryophyta</taxon>
        <taxon>Tracheophyta</taxon>
        <taxon>Spermatophyta</taxon>
        <taxon>Magnoliopsida</taxon>
        <taxon>Liliopsida</taxon>
        <taxon>Acoraceae</taxon>
        <taxon>Acorus</taxon>
    </lineage>
</organism>
<name>NU5C_ACOCL</name>
<feature type="chain" id="PRO_0000360905" description="NAD(P)H-quinone oxidoreductase subunit 5, chloroplastic">
    <location>
        <begin position="1"/>
        <end position="739"/>
    </location>
</feature>
<feature type="transmembrane region" description="Helical" evidence="2">
    <location>
        <begin position="9"/>
        <end position="29"/>
    </location>
</feature>
<feature type="transmembrane region" description="Helical" evidence="2">
    <location>
        <begin position="39"/>
        <end position="59"/>
    </location>
</feature>
<feature type="transmembrane region" description="Helical" evidence="2">
    <location>
        <begin position="89"/>
        <end position="109"/>
    </location>
</feature>
<feature type="transmembrane region" description="Helical" evidence="2">
    <location>
        <begin position="125"/>
        <end position="145"/>
    </location>
</feature>
<feature type="transmembrane region" description="Helical" evidence="2">
    <location>
        <begin position="147"/>
        <end position="167"/>
    </location>
</feature>
<feature type="transmembrane region" description="Helical" evidence="2">
    <location>
        <begin position="185"/>
        <end position="205"/>
    </location>
</feature>
<feature type="transmembrane region" description="Helical" evidence="2">
    <location>
        <begin position="224"/>
        <end position="244"/>
    </location>
</feature>
<feature type="transmembrane region" description="Helical" evidence="2">
    <location>
        <begin position="258"/>
        <end position="278"/>
    </location>
</feature>
<feature type="transmembrane region" description="Helical" evidence="2">
    <location>
        <begin position="280"/>
        <end position="300"/>
    </location>
</feature>
<feature type="transmembrane region" description="Helical" evidence="2">
    <location>
        <begin position="327"/>
        <end position="347"/>
    </location>
</feature>
<feature type="transmembrane region" description="Helical" evidence="2">
    <location>
        <begin position="354"/>
        <end position="374"/>
    </location>
</feature>
<feature type="transmembrane region" description="Helical" evidence="2">
    <location>
        <begin position="396"/>
        <end position="416"/>
    </location>
</feature>
<feature type="transmembrane region" description="Helical" evidence="2">
    <location>
        <begin position="425"/>
        <end position="445"/>
    </location>
</feature>
<feature type="transmembrane region" description="Helical" evidence="2">
    <location>
        <begin position="544"/>
        <end position="564"/>
    </location>
</feature>
<feature type="transmembrane region" description="Helical" evidence="2">
    <location>
        <begin position="603"/>
        <end position="623"/>
    </location>
</feature>
<feature type="transmembrane region" description="Helical" evidence="2">
    <location>
        <begin position="716"/>
        <end position="736"/>
    </location>
</feature>
<accession>Q3V4Y7</accession>
<geneLocation type="chloroplast"/>
<dbReference type="EC" id="7.1.1.-"/>
<dbReference type="EMBL" id="AJ879453">
    <property type="protein sequence ID" value="CAI53841.1"/>
    <property type="molecule type" value="Genomic_DNA"/>
</dbReference>
<dbReference type="RefSeq" id="YP_319810.1">
    <property type="nucleotide sequence ID" value="NC_007407.1"/>
</dbReference>
<dbReference type="SMR" id="Q3V4Y7"/>
<dbReference type="GeneID" id="3677483"/>
<dbReference type="GO" id="GO:0009535">
    <property type="term" value="C:chloroplast thylakoid membrane"/>
    <property type="evidence" value="ECO:0007669"/>
    <property type="project" value="UniProtKB-SubCell"/>
</dbReference>
<dbReference type="GO" id="GO:0008137">
    <property type="term" value="F:NADH dehydrogenase (ubiquinone) activity"/>
    <property type="evidence" value="ECO:0007669"/>
    <property type="project" value="InterPro"/>
</dbReference>
<dbReference type="GO" id="GO:0048038">
    <property type="term" value="F:quinone binding"/>
    <property type="evidence" value="ECO:0007669"/>
    <property type="project" value="UniProtKB-KW"/>
</dbReference>
<dbReference type="GO" id="GO:0042773">
    <property type="term" value="P:ATP synthesis coupled electron transport"/>
    <property type="evidence" value="ECO:0007669"/>
    <property type="project" value="InterPro"/>
</dbReference>
<dbReference type="GO" id="GO:0015990">
    <property type="term" value="P:electron transport coupled proton transport"/>
    <property type="evidence" value="ECO:0007669"/>
    <property type="project" value="TreeGrafter"/>
</dbReference>
<dbReference type="Gene3D" id="1.20.5.2700">
    <property type="match status" value="1"/>
</dbReference>
<dbReference type="InterPro" id="IPR002128">
    <property type="entry name" value="NADH_UbQ_OxRdtase_chlpt_su5_C"/>
</dbReference>
<dbReference type="InterPro" id="IPR018393">
    <property type="entry name" value="NADHpl_OxRdtase_5_subgr"/>
</dbReference>
<dbReference type="InterPro" id="IPR001750">
    <property type="entry name" value="ND/Mrp_TM"/>
</dbReference>
<dbReference type="InterPro" id="IPR003945">
    <property type="entry name" value="NU5C-like"/>
</dbReference>
<dbReference type="InterPro" id="IPR001516">
    <property type="entry name" value="Proton_antipo_N"/>
</dbReference>
<dbReference type="NCBIfam" id="TIGR01974">
    <property type="entry name" value="NDH_I_L"/>
    <property type="match status" value="1"/>
</dbReference>
<dbReference type="NCBIfam" id="NF005141">
    <property type="entry name" value="PRK06590.1"/>
    <property type="match status" value="1"/>
</dbReference>
<dbReference type="PANTHER" id="PTHR42829">
    <property type="entry name" value="NADH-UBIQUINONE OXIDOREDUCTASE CHAIN 5"/>
    <property type="match status" value="1"/>
</dbReference>
<dbReference type="PANTHER" id="PTHR42829:SF2">
    <property type="entry name" value="NADH-UBIQUINONE OXIDOREDUCTASE CHAIN 5"/>
    <property type="match status" value="1"/>
</dbReference>
<dbReference type="Pfam" id="PF01010">
    <property type="entry name" value="Proton_antipo_C"/>
    <property type="match status" value="1"/>
</dbReference>
<dbReference type="Pfam" id="PF00361">
    <property type="entry name" value="Proton_antipo_M"/>
    <property type="match status" value="1"/>
</dbReference>
<dbReference type="Pfam" id="PF00662">
    <property type="entry name" value="Proton_antipo_N"/>
    <property type="match status" value="1"/>
</dbReference>
<dbReference type="PRINTS" id="PR01434">
    <property type="entry name" value="NADHDHGNASE5"/>
</dbReference>
<dbReference type="PRINTS" id="PR01435">
    <property type="entry name" value="NPOXDRDTASE5"/>
</dbReference>
<keyword id="KW-0150">Chloroplast</keyword>
<keyword id="KW-0472">Membrane</keyword>
<keyword id="KW-0520">NAD</keyword>
<keyword id="KW-0521">NADP</keyword>
<keyword id="KW-0934">Plastid</keyword>
<keyword id="KW-0618">Plastoquinone</keyword>
<keyword id="KW-0874">Quinone</keyword>
<keyword id="KW-0793">Thylakoid</keyword>
<keyword id="KW-1278">Translocase</keyword>
<keyword id="KW-0812">Transmembrane</keyword>
<keyword id="KW-1133">Transmembrane helix</keyword>
<keyword id="KW-0813">Transport</keyword>
<comment type="function">
    <text evidence="1">NDH shuttles electrons from NAD(P)H:plastoquinone, via FMN and iron-sulfur (Fe-S) centers, to quinones in the photosynthetic chain and possibly in a chloroplast respiratory chain. The immediate electron acceptor for the enzyme in this species is believed to be plastoquinone. Couples the redox reaction to proton translocation, and thus conserves the redox energy in a proton gradient (By similarity).</text>
</comment>
<comment type="catalytic activity">
    <reaction>
        <text>a plastoquinone + NADH + (n+1) H(+)(in) = a plastoquinol + NAD(+) + n H(+)(out)</text>
        <dbReference type="Rhea" id="RHEA:42608"/>
        <dbReference type="Rhea" id="RHEA-COMP:9561"/>
        <dbReference type="Rhea" id="RHEA-COMP:9562"/>
        <dbReference type="ChEBI" id="CHEBI:15378"/>
        <dbReference type="ChEBI" id="CHEBI:17757"/>
        <dbReference type="ChEBI" id="CHEBI:57540"/>
        <dbReference type="ChEBI" id="CHEBI:57945"/>
        <dbReference type="ChEBI" id="CHEBI:62192"/>
    </reaction>
</comment>
<comment type="catalytic activity">
    <reaction>
        <text>a plastoquinone + NADPH + (n+1) H(+)(in) = a plastoquinol + NADP(+) + n H(+)(out)</text>
        <dbReference type="Rhea" id="RHEA:42612"/>
        <dbReference type="Rhea" id="RHEA-COMP:9561"/>
        <dbReference type="Rhea" id="RHEA-COMP:9562"/>
        <dbReference type="ChEBI" id="CHEBI:15378"/>
        <dbReference type="ChEBI" id="CHEBI:17757"/>
        <dbReference type="ChEBI" id="CHEBI:57783"/>
        <dbReference type="ChEBI" id="CHEBI:58349"/>
        <dbReference type="ChEBI" id="CHEBI:62192"/>
    </reaction>
</comment>
<comment type="subunit">
    <text evidence="1">NDH is composed of at least 16 different subunits, 5 of which are encoded in the nucleus.</text>
</comment>
<comment type="subcellular location">
    <subcellularLocation>
        <location evidence="1">Plastid</location>
        <location evidence="1">Chloroplast thylakoid membrane</location>
        <topology evidence="1">Multi-pass membrane protein</topology>
    </subcellularLocation>
</comment>
<comment type="similarity">
    <text evidence="3">Belongs to the complex I subunit 5 family.</text>
</comment>
<protein>
    <recommendedName>
        <fullName>NAD(P)H-quinone oxidoreductase subunit 5, chloroplastic</fullName>
        <ecNumber>7.1.1.-</ecNumber>
    </recommendedName>
    <alternativeName>
        <fullName>NAD(P)H dehydrogenase subunit 5</fullName>
    </alternativeName>
    <alternativeName>
        <fullName>NADH-plastoquinone oxidoreductase subunit 5</fullName>
    </alternativeName>
</protein>
<gene>
    <name type="primary">ndhF</name>
</gene>
<proteinExistence type="inferred from homology"/>
<sequence>MEHTYQYAWIIPFLPFPVTISIGLGLLLVPTATKNLRRIWAFFSVLLLSIAMVFSADLAIQQINGSFIYQYSWSWTINNTFSLEFGYLIDPLTSIMLILITTVGIMVLIYSDNYMSHDQGYLRFFAYMSFFNTSMLGLVTSSNLIQIYIFWELVGMCSYLLIGFWFTRPTAANACQKAFVTNRVGDFGLLLGILGLYWITGSFEFRDLFEILKNLIHNNEVNSLFAALCASLLFVGAVAKSAQFPLHVWLPDAMEGPTPISALIHAATMVAAGIFLVARLLPLFTVIPYIMNFISLIGIITVLLGATLALAQRDIKRSLAYSTMSQLGYIMLAPGIGSYRAALFHLITHAYSKALLFLGSGSIIHSMEPIVGYSPEKSQNMILMGGLRRYVPITKTTFFLGTLSLCGMPPLACFWSKDEILNDTWLYSPIFAIIAWSTAGLTAFYMFRVYLLTFDGHLQVHFQNFSSTKNSSFYSISIWGKEVPKPLNVNLFLSTMNTNEKMSFFSKNTYQIDRNGKNRIRYFSTQFGNKYTSMYPHESDNTMLFPMLVLVLFTLFIGFIGIPFDQGVIDLDILSKWLTPSINLLHSNSGDSFDWYEFVTNAIYSVTISFLGIFLAYIFYGSVYSSFQNLDLINSFVRIDSKRILSDRIINGIYNWSYNRGYIDVFYGKVLSNTIRGLAELIHFFDRRVIDGITNGVGVVSFFVGEGIKSVGGGRISSYIFLYAFSVSICLIIYYFFRF</sequence>